<sequence length="324" mass="34973">MTSTLIPKETSTPGGRDLRDARADYFFKLLLTAAVAFVLIALVSAALSMLWGGRQALQLQGVSFFYSTEWNPVENKYGALTPIYGTIVTALIAMLIAVPVSFGIAFFLTEVAPRWLRRPVGTAIELLAGIPSIIYGMWGLFVLVPVMTDYITPFLNDHIGTLPLIGTLFQGPPLGIGTLSAGFVLAIMVIPFISSIMREVFLTVPTQLKESAYALGSTKWEVSWNIVLPYTRSAVIGGMFLGLGRALGETMAVAFVIGNSVRLSPSLLTPGTTIAALIANDFGEATESYRSALLLLGFVLFIVTFAVLVIARLMLLRLSRKEGN</sequence>
<comment type="function">
    <text evidence="1">Part of a binding-protein-dependent transport system for phosphate; probably responsible for the translocation of the substrate across the membrane.</text>
</comment>
<comment type="subcellular location">
    <subcellularLocation>
        <location evidence="1">Cell inner membrane</location>
        <topology evidence="2">Multi-pass membrane protein</topology>
    </subcellularLocation>
</comment>
<comment type="similarity">
    <text evidence="3">Belongs to the binding-protein-dependent transport system permease family. CysTW subfamily.</text>
</comment>
<proteinExistence type="inferred from homology"/>
<reference key="1">
    <citation type="journal article" date="2000" name="Nature">
        <title>The genome sequence of the plant pathogen Xylella fastidiosa.</title>
        <authorList>
            <person name="Simpson A.J.G."/>
            <person name="Reinach F.C."/>
            <person name="Arruda P."/>
            <person name="Abreu F.A."/>
            <person name="Acencio M."/>
            <person name="Alvarenga R."/>
            <person name="Alves L.M.C."/>
            <person name="Araya J.E."/>
            <person name="Baia G.S."/>
            <person name="Baptista C.S."/>
            <person name="Barros M.H."/>
            <person name="Bonaccorsi E.D."/>
            <person name="Bordin S."/>
            <person name="Bove J.M."/>
            <person name="Briones M.R.S."/>
            <person name="Bueno M.R.P."/>
            <person name="Camargo A.A."/>
            <person name="Camargo L.E.A."/>
            <person name="Carraro D.M."/>
            <person name="Carrer H."/>
            <person name="Colauto N.B."/>
            <person name="Colombo C."/>
            <person name="Costa F.F."/>
            <person name="Costa M.C.R."/>
            <person name="Costa-Neto C.M."/>
            <person name="Coutinho L.L."/>
            <person name="Cristofani M."/>
            <person name="Dias-Neto E."/>
            <person name="Docena C."/>
            <person name="El-Dorry H."/>
            <person name="Facincani A.P."/>
            <person name="Ferreira A.J.S."/>
            <person name="Ferreira V.C.A."/>
            <person name="Ferro J.A."/>
            <person name="Fraga J.S."/>
            <person name="Franca S.C."/>
            <person name="Franco M.C."/>
            <person name="Frohme M."/>
            <person name="Furlan L.R."/>
            <person name="Garnier M."/>
            <person name="Goldman G.H."/>
            <person name="Goldman M.H.S."/>
            <person name="Gomes S.L."/>
            <person name="Gruber A."/>
            <person name="Ho P.L."/>
            <person name="Hoheisel J.D."/>
            <person name="Junqueira M.L."/>
            <person name="Kemper E.L."/>
            <person name="Kitajima J.P."/>
            <person name="Krieger J.E."/>
            <person name="Kuramae E.E."/>
            <person name="Laigret F."/>
            <person name="Lambais M.R."/>
            <person name="Leite L.C.C."/>
            <person name="Lemos E.G.M."/>
            <person name="Lemos M.V.F."/>
            <person name="Lopes S.A."/>
            <person name="Lopes C.R."/>
            <person name="Machado J.A."/>
            <person name="Machado M.A."/>
            <person name="Madeira A.M.B.N."/>
            <person name="Madeira H.M.F."/>
            <person name="Marino C.L."/>
            <person name="Marques M.V."/>
            <person name="Martins E.A.L."/>
            <person name="Martins E.M.F."/>
            <person name="Matsukuma A.Y."/>
            <person name="Menck C.F.M."/>
            <person name="Miracca E.C."/>
            <person name="Miyaki C.Y."/>
            <person name="Monteiro-Vitorello C.B."/>
            <person name="Moon D.H."/>
            <person name="Nagai M.A."/>
            <person name="Nascimento A.L.T.O."/>
            <person name="Netto L.E.S."/>
            <person name="Nhani A. Jr."/>
            <person name="Nobrega F.G."/>
            <person name="Nunes L.R."/>
            <person name="Oliveira M.A."/>
            <person name="de Oliveira M.C."/>
            <person name="de Oliveira R.C."/>
            <person name="Palmieri D.A."/>
            <person name="Paris A."/>
            <person name="Peixoto B.R."/>
            <person name="Pereira G.A.G."/>
            <person name="Pereira H.A. Jr."/>
            <person name="Pesquero J.B."/>
            <person name="Quaggio R.B."/>
            <person name="Roberto P.G."/>
            <person name="Rodrigues V."/>
            <person name="de Rosa A.J.M."/>
            <person name="de Rosa V.E. Jr."/>
            <person name="de Sa R.G."/>
            <person name="Santelli R.V."/>
            <person name="Sawasaki H.E."/>
            <person name="da Silva A.C.R."/>
            <person name="da Silva A.M."/>
            <person name="da Silva F.R."/>
            <person name="Silva W.A. Jr."/>
            <person name="da Silveira J.F."/>
            <person name="Silvestri M.L.Z."/>
            <person name="Siqueira W.J."/>
            <person name="de Souza A.A."/>
            <person name="de Souza A.P."/>
            <person name="Terenzi M.F."/>
            <person name="Truffi D."/>
            <person name="Tsai S.M."/>
            <person name="Tsuhako M.H."/>
            <person name="Vallada H."/>
            <person name="Van Sluys M.A."/>
            <person name="Verjovski-Almeida S."/>
            <person name="Vettore A.L."/>
            <person name="Zago M.A."/>
            <person name="Zatz M."/>
            <person name="Meidanis J."/>
            <person name="Setubal J.C."/>
        </authorList>
    </citation>
    <scope>NUCLEOTIDE SEQUENCE [LARGE SCALE GENOMIC DNA]</scope>
    <source>
        <strain>9a5c</strain>
    </source>
</reference>
<evidence type="ECO:0000250" key="1"/>
<evidence type="ECO:0000255" key="2">
    <source>
        <dbReference type="PROSITE-ProRule" id="PRU00441"/>
    </source>
</evidence>
<evidence type="ECO:0000305" key="3"/>
<protein>
    <recommendedName>
        <fullName>Phosphate transport system permease protein PstC</fullName>
    </recommendedName>
</protein>
<gene>
    <name type="primary">pstC</name>
    <name type="ordered locus">XF_2142</name>
</gene>
<accession>Q9PBK2</accession>
<feature type="chain" id="PRO_0000060213" description="Phosphate transport system permease protein PstC">
    <location>
        <begin position="1"/>
        <end position="324"/>
    </location>
</feature>
<feature type="transmembrane region" description="Helical" evidence="2">
    <location>
        <begin position="29"/>
        <end position="49"/>
    </location>
</feature>
<feature type="transmembrane region" description="Helical" evidence="2">
    <location>
        <begin position="87"/>
        <end position="107"/>
    </location>
</feature>
<feature type="transmembrane region" description="Helical" evidence="2">
    <location>
        <begin position="126"/>
        <end position="146"/>
    </location>
</feature>
<feature type="transmembrane region" description="Helical" evidence="2">
    <location>
        <begin position="173"/>
        <end position="193"/>
    </location>
</feature>
<feature type="transmembrane region" description="Helical" evidence="2">
    <location>
        <begin position="235"/>
        <end position="255"/>
    </location>
</feature>
<feature type="transmembrane region" description="Helical" evidence="2">
    <location>
        <begin position="291"/>
        <end position="311"/>
    </location>
</feature>
<feature type="domain" description="ABC transmembrane type-1" evidence="2">
    <location>
        <begin position="83"/>
        <end position="311"/>
    </location>
</feature>
<keyword id="KW-0997">Cell inner membrane</keyword>
<keyword id="KW-1003">Cell membrane</keyword>
<keyword id="KW-0472">Membrane</keyword>
<keyword id="KW-0592">Phosphate transport</keyword>
<keyword id="KW-0812">Transmembrane</keyword>
<keyword id="KW-1133">Transmembrane helix</keyword>
<keyword id="KW-0813">Transport</keyword>
<name>PSTC_XYLFA</name>
<dbReference type="EMBL" id="AE003849">
    <property type="protein sequence ID" value="AAF84941.1"/>
    <property type="molecule type" value="Genomic_DNA"/>
</dbReference>
<dbReference type="PIR" id="B82593">
    <property type="entry name" value="B82593"/>
</dbReference>
<dbReference type="RefSeq" id="WP_010894591.1">
    <property type="nucleotide sequence ID" value="NC_002488.3"/>
</dbReference>
<dbReference type="SMR" id="Q9PBK2"/>
<dbReference type="STRING" id="160492.XF_2142"/>
<dbReference type="KEGG" id="xfa:XF_2142"/>
<dbReference type="eggNOG" id="COG0573">
    <property type="taxonomic scope" value="Bacteria"/>
</dbReference>
<dbReference type="HOGENOM" id="CLU_033621_1_3_6"/>
<dbReference type="Proteomes" id="UP000000812">
    <property type="component" value="Chromosome"/>
</dbReference>
<dbReference type="GO" id="GO:0005886">
    <property type="term" value="C:plasma membrane"/>
    <property type="evidence" value="ECO:0007669"/>
    <property type="project" value="UniProtKB-SubCell"/>
</dbReference>
<dbReference type="GO" id="GO:0005315">
    <property type="term" value="F:phosphate transmembrane transporter activity"/>
    <property type="evidence" value="ECO:0007669"/>
    <property type="project" value="InterPro"/>
</dbReference>
<dbReference type="GO" id="GO:0006817">
    <property type="term" value="P:phosphate ion transport"/>
    <property type="evidence" value="ECO:0007669"/>
    <property type="project" value="UniProtKB-KW"/>
</dbReference>
<dbReference type="CDD" id="cd06261">
    <property type="entry name" value="TM_PBP2"/>
    <property type="match status" value="1"/>
</dbReference>
<dbReference type="Gene3D" id="1.10.3720.10">
    <property type="entry name" value="MetI-like"/>
    <property type="match status" value="1"/>
</dbReference>
<dbReference type="InterPro" id="IPR000515">
    <property type="entry name" value="MetI-like"/>
</dbReference>
<dbReference type="InterPro" id="IPR035906">
    <property type="entry name" value="MetI-like_sf"/>
</dbReference>
<dbReference type="InterPro" id="IPR011864">
    <property type="entry name" value="Phosphate_PstC"/>
</dbReference>
<dbReference type="InterPro" id="IPR051124">
    <property type="entry name" value="Phosphate_Transport_Permease"/>
</dbReference>
<dbReference type="NCBIfam" id="TIGR02138">
    <property type="entry name" value="phosphate_pstC"/>
    <property type="match status" value="1"/>
</dbReference>
<dbReference type="PANTHER" id="PTHR30425">
    <property type="entry name" value="PHOSPHATE TRANSPORT SYSTEM PERMEASE PROTEIN PST"/>
    <property type="match status" value="1"/>
</dbReference>
<dbReference type="PANTHER" id="PTHR30425:SF1">
    <property type="entry name" value="PHOSPHATE TRANSPORT SYSTEM PERMEASE PROTEIN PSTC"/>
    <property type="match status" value="1"/>
</dbReference>
<dbReference type="Pfam" id="PF00528">
    <property type="entry name" value="BPD_transp_1"/>
    <property type="match status" value="1"/>
</dbReference>
<dbReference type="SUPFAM" id="SSF161098">
    <property type="entry name" value="MetI-like"/>
    <property type="match status" value="1"/>
</dbReference>
<dbReference type="PROSITE" id="PS50928">
    <property type="entry name" value="ABC_TM1"/>
    <property type="match status" value="1"/>
</dbReference>
<organism>
    <name type="scientific">Xylella fastidiosa (strain 9a5c)</name>
    <dbReference type="NCBI Taxonomy" id="160492"/>
    <lineage>
        <taxon>Bacteria</taxon>
        <taxon>Pseudomonadati</taxon>
        <taxon>Pseudomonadota</taxon>
        <taxon>Gammaproteobacteria</taxon>
        <taxon>Lysobacterales</taxon>
        <taxon>Lysobacteraceae</taxon>
        <taxon>Xylella</taxon>
    </lineage>
</organism>